<keyword id="KW-0025">Alternative splicing</keyword>
<keyword id="KW-1262">Eukaryotic host gene expression shutoff by virus</keyword>
<keyword id="KW-1035">Host cytoplasm</keyword>
<keyword id="KW-1190">Host gene expression shutoff by virus</keyword>
<keyword id="KW-1192">Host mRNA suppression by virus</keyword>
<keyword id="KW-1048">Host nucleus</keyword>
<keyword id="KW-0945">Host-virus interaction</keyword>
<keyword id="KW-1090">Inhibition of host innate immune response by virus</keyword>
<keyword id="KW-1114">Inhibition of host interferon signaling pathway by virus</keyword>
<keyword id="KW-1102">Inhibition of host PKR by virus</keyword>
<keyword id="KW-1103">Inhibition of host pre-mRNA processing by virus</keyword>
<keyword id="KW-1088">Inhibition of host RIG-I by virus</keyword>
<keyword id="KW-1113">Inhibition of host RLR pathway by virus</keyword>
<keyword id="KW-0922">Interferon antiviral system evasion</keyword>
<keyword id="KW-0694">RNA-binding</keyword>
<keyword id="KW-0832">Ubl conjugation</keyword>
<keyword id="KW-0899">Viral immunoevasion</keyword>
<proteinExistence type="inferred from homology"/>
<accession>P08268</accession>
<feature type="chain" id="PRO_0000078940" description="Non-structural protein 1">
    <location>
        <begin position="1" status="less than"/>
        <end position="227"/>
    </location>
</feature>
<feature type="region of interest" description="CPSF4-binding" evidence="1">
    <location>
        <begin position="177"/>
        <end position="212"/>
    </location>
</feature>
<feature type="region of interest" description="PABPN1-binding" evidence="1">
    <location>
        <begin position="220"/>
        <end position="227"/>
    </location>
</feature>
<feature type="short sequence motif" description="Nuclear localization signal" evidence="1">
    <location>
        <begin position="31"/>
        <end position="35"/>
    </location>
</feature>
<feature type="short sequence motif" description="Nuclear export signal" evidence="1">
    <location>
        <begin position="134"/>
        <end position="143"/>
    </location>
</feature>
<feature type="non-terminal residue">
    <location>
        <position position="1"/>
    </location>
</feature>
<sequence>NTVSSFQVDCFLWHVLKRFADQELGDAPFLDRLRRDQKSLRGRGSTLGLDIETATRAGKQIVERILEEESDEALKMNIASVPASRYLTDMTLEEMSRDWFMLMPKQKVAGSLCIRMDQAIMDKNIILKANFSVIFDRLETLILLRAFTEEGAIVGEISPLPSLPGHTDEDVKNAIGILIGGLEWNDNTVRVSETLQRFAWRSSNEDGRPPLPPKQKWKMARTIEPEV</sequence>
<name>NS1_I76AM</name>
<protein>
    <recommendedName>
        <fullName evidence="1">Non-structural protein 1</fullName>
        <shortName evidence="1">NS1</shortName>
    </recommendedName>
    <alternativeName>
        <fullName evidence="1">NS1A</fullName>
    </alternativeName>
</protein>
<gene>
    <name evidence="1" type="primary">NS</name>
</gene>
<evidence type="ECO:0000255" key="1">
    <source>
        <dbReference type="HAMAP-Rule" id="MF_04066"/>
    </source>
</evidence>
<dbReference type="EMBL" id="M17070">
    <property type="protein sequence ID" value="AAA43548.1"/>
    <property type="molecule type" value="Genomic_RNA"/>
</dbReference>
<dbReference type="SMR" id="P08268"/>
<dbReference type="GO" id="GO:0030430">
    <property type="term" value="C:host cell cytoplasm"/>
    <property type="evidence" value="ECO:0007669"/>
    <property type="project" value="UniProtKB-SubCell"/>
</dbReference>
<dbReference type="GO" id="GO:0042025">
    <property type="term" value="C:host cell nucleus"/>
    <property type="evidence" value="ECO:0007669"/>
    <property type="project" value="UniProtKB-SubCell"/>
</dbReference>
<dbReference type="GO" id="GO:0030291">
    <property type="term" value="F:protein serine/threonine kinase inhibitor activity"/>
    <property type="evidence" value="ECO:0007669"/>
    <property type="project" value="UniProtKB-KW"/>
</dbReference>
<dbReference type="GO" id="GO:0003723">
    <property type="term" value="F:RNA binding"/>
    <property type="evidence" value="ECO:0007669"/>
    <property type="project" value="UniProtKB-KW"/>
</dbReference>
<dbReference type="GO" id="GO:0039540">
    <property type="term" value="P:symbiont-mediated suppression of host cytoplasmic pattern recognition receptor signaling pathway via inhibition of RIG-I activity"/>
    <property type="evidence" value="ECO:0007669"/>
    <property type="project" value="UniProtKB-KW"/>
</dbReference>
<dbReference type="GO" id="GO:0039657">
    <property type="term" value="P:symbiont-mediated suppression of host gene expression"/>
    <property type="evidence" value="ECO:0007669"/>
    <property type="project" value="UniProtKB-KW"/>
</dbReference>
<dbReference type="GO" id="GO:0039524">
    <property type="term" value="P:symbiont-mediated suppression of host mRNA processing"/>
    <property type="evidence" value="ECO:0007669"/>
    <property type="project" value="UniProtKB-KW"/>
</dbReference>
<dbReference type="GO" id="GO:0039580">
    <property type="term" value="P:symbiont-mediated suppression of host PKR/eIFalpha signaling"/>
    <property type="evidence" value="ECO:0007669"/>
    <property type="project" value="UniProtKB-KW"/>
</dbReference>
<dbReference type="GO" id="GO:0039502">
    <property type="term" value="P:symbiont-mediated suppression of host type I interferon-mediated signaling pathway"/>
    <property type="evidence" value="ECO:0007669"/>
    <property type="project" value="UniProtKB-KW"/>
</dbReference>
<dbReference type="FunFam" id="1.10.287.10:FF:000001">
    <property type="entry name" value="Non-structural protein 1"/>
    <property type="match status" value="1"/>
</dbReference>
<dbReference type="FunFam" id="3.30.420.330:FF:000001">
    <property type="entry name" value="Non-structural protein 1"/>
    <property type="match status" value="1"/>
</dbReference>
<dbReference type="Gene3D" id="3.30.420.330">
    <property type="entry name" value="Influenza virus non-structural protein, effector domain"/>
    <property type="match status" value="1"/>
</dbReference>
<dbReference type="Gene3D" id="1.10.287.10">
    <property type="entry name" value="S15/NS1, RNA-binding"/>
    <property type="match status" value="1"/>
</dbReference>
<dbReference type="HAMAP" id="MF_04066">
    <property type="entry name" value="INFV_NS1"/>
    <property type="match status" value="1"/>
</dbReference>
<dbReference type="InterPro" id="IPR004208">
    <property type="entry name" value="NS1"/>
</dbReference>
<dbReference type="InterPro" id="IPR000256">
    <property type="entry name" value="NS1A"/>
</dbReference>
<dbReference type="InterPro" id="IPR038064">
    <property type="entry name" value="NS1A_effect_dom-like_sf"/>
</dbReference>
<dbReference type="InterPro" id="IPR009068">
    <property type="entry name" value="uS15_NS1_RNA-bd_sf"/>
</dbReference>
<dbReference type="Pfam" id="PF00600">
    <property type="entry name" value="Flu_NS1"/>
    <property type="match status" value="1"/>
</dbReference>
<dbReference type="SUPFAM" id="SSF143021">
    <property type="entry name" value="Ns1 effector domain-like"/>
    <property type="match status" value="1"/>
</dbReference>
<dbReference type="SUPFAM" id="SSF47060">
    <property type="entry name" value="S15/NS1 RNA-binding domain"/>
    <property type="match status" value="1"/>
</dbReference>
<organismHost>
    <name type="scientific">Aves</name>
    <dbReference type="NCBI Taxonomy" id="8782"/>
</organismHost>
<organism>
    <name type="scientific">Influenza A virus (strain A/Mynah/Haneda-Thai/1976 H3N1)</name>
    <dbReference type="NCBI Taxonomy" id="11444"/>
    <lineage>
        <taxon>Viruses</taxon>
        <taxon>Riboviria</taxon>
        <taxon>Orthornavirae</taxon>
        <taxon>Negarnaviricota</taxon>
        <taxon>Polyploviricotina</taxon>
        <taxon>Insthoviricetes</taxon>
        <taxon>Articulavirales</taxon>
        <taxon>Orthomyxoviridae</taxon>
        <taxon>Alphainfluenzavirus</taxon>
        <taxon>Alphainfluenzavirus influenzae</taxon>
        <taxon>Influenza A virus</taxon>
    </lineage>
</organism>
<comment type="function">
    <text evidence="1">Inhibits post-transcriptional processing of cellular pre-mRNA, by binding and inhibiting two cellular proteins that are required for the 3'-end processing of cellular pre-mRNAs: the 30 kDa cleavage and polyadenylation specificity factor/CPSF4 and the poly(A)-binding protein 2/PABPN1. In turn, unprocessed 3' end pre-mRNAs accumulate in the host nucleus and are no longer exported to the cytoplasm. Cellular protein synthesis is thereby shut off very early after virus infection. Viral protein synthesis is not affected by the inhibition of the cellular 3' end processing machinery because the poly(A) tails of viral mRNAs are produced by the viral polymerase through a stuttering mechanism. Prevents the establishment of the cellular antiviral state by inhibiting TRIM25-mediated RIGI ubiquitination, which normally triggers the antiviral transduction signal that leads to the activation of type I IFN genes by transcription factors IRF3 and IRF7. Also binds poly(A) and U6 snRNA. Inhibits the integrated stress response (ISR) in the infected cell by blocking dsRNA binding by EIF2AK2/PKR and further phosphorylation of EIF2S1/EIF-2ALPHA. Stress granule formation is thus inhibited, which allows protein synthesis and viral replication.</text>
</comment>
<comment type="subunit">
    <text evidence="1">Homodimer. Interacts with host TRIM25 (via coiled coil); this interaction specifically inhibits TRIM25 multimerization and TRIM25-mediated RIGI CARD ubiquitination. Interacts with human EIF2AK2/PKR, CPSF4, IVNS1ABP and PABPN1.</text>
</comment>
<comment type="subcellular location">
    <subcellularLocation>
        <location evidence="1">Host nucleus</location>
    </subcellularLocation>
    <subcellularLocation>
        <location evidence="1">Host cytoplasm</location>
    </subcellularLocation>
    <text evidence="1">In uninfected, transfected cells, NS1 is localized in the nucleus. Only in virus infected cells, the nuclear export signal is unveiled, presumably by a viral protein, and a fraction of NS1 is exported in the cytoplasm.</text>
</comment>
<comment type="alternative products">
    <event type="alternative splicing"/>
    <isoform>
        <id>P08268-1</id>
        <name>NS1</name>
        <sequence type="displayed"/>
    </isoform>
    <isoform>
        <id>P08269-1</id>
        <name>NEP</name>
        <name>NS2</name>
        <sequence type="external"/>
    </isoform>
</comment>
<comment type="domain">
    <text evidence="1">The dsRNA-binding region is required for suppression of RNA silencing.</text>
</comment>
<comment type="PTM">
    <text evidence="1">Upon interferon induction, ISGylated via host HERC5; this results in the impairment of NS1 interaction with RNA targets due to its inability to form homodimers and to interact with host EIF2AK2/PKR.</text>
</comment>
<comment type="similarity">
    <text evidence="1">Belongs to the influenza A viruses NS1 family.</text>
</comment>
<reference key="1">
    <citation type="journal article" date="1987" name="Virology">
        <title>Genetic divergence of the NS genes of avian influenza viruses.</title>
        <authorList>
            <person name="Nakajima K."/>
            <person name="Nobusawa E."/>
            <person name="Ogawa T."/>
            <person name="Nakajima S."/>
        </authorList>
    </citation>
    <scope>NUCLEOTIDE SEQUENCE [GENOMIC RNA]</scope>
</reference>
<reference key="2">
    <citation type="journal article" date="2003" name="Virology">
        <title>Intracellular warfare between human influenza viruses and human cells: the roles of the viral NS1 protein.</title>
        <authorList>
            <person name="Krug R.M."/>
            <person name="Yuan W."/>
            <person name="Noah D.L."/>
            <person name="Latham A.G."/>
        </authorList>
    </citation>
    <scope>REVIEW</scope>
</reference>